<feature type="chain" id="PRO_1000015768" description="Elongation factor Tu">
    <location>
        <begin position="1"/>
        <end position="409"/>
    </location>
</feature>
<feature type="domain" description="tr-type G">
    <location>
        <begin position="10"/>
        <end position="214"/>
    </location>
</feature>
<feature type="region of interest" description="G1" evidence="1">
    <location>
        <begin position="19"/>
        <end position="26"/>
    </location>
</feature>
<feature type="region of interest" description="G2" evidence="1">
    <location>
        <begin position="60"/>
        <end position="64"/>
    </location>
</feature>
<feature type="region of interest" description="G3" evidence="1">
    <location>
        <begin position="81"/>
        <end position="84"/>
    </location>
</feature>
<feature type="region of interest" description="G4" evidence="1">
    <location>
        <begin position="136"/>
        <end position="139"/>
    </location>
</feature>
<feature type="region of interest" description="G5" evidence="1">
    <location>
        <begin position="174"/>
        <end position="176"/>
    </location>
</feature>
<feature type="binding site" evidence="2">
    <location>
        <begin position="19"/>
        <end position="26"/>
    </location>
    <ligand>
        <name>GTP</name>
        <dbReference type="ChEBI" id="CHEBI:37565"/>
    </ligand>
</feature>
<feature type="binding site" evidence="2">
    <location>
        <position position="26"/>
    </location>
    <ligand>
        <name>Mg(2+)</name>
        <dbReference type="ChEBI" id="CHEBI:18420"/>
    </ligand>
</feature>
<feature type="binding site" evidence="2">
    <location>
        <begin position="81"/>
        <end position="85"/>
    </location>
    <ligand>
        <name>GTP</name>
        <dbReference type="ChEBI" id="CHEBI:37565"/>
    </ligand>
</feature>
<feature type="binding site" evidence="2">
    <location>
        <begin position="136"/>
        <end position="139"/>
    </location>
    <ligand>
        <name>GTP</name>
        <dbReference type="ChEBI" id="CHEBI:37565"/>
    </ligand>
</feature>
<proteinExistence type="inferred from homology"/>
<comment type="function">
    <text evidence="2">GTP hydrolase that promotes the GTP-dependent binding of aminoacyl-tRNA to the A-site of ribosomes during protein biosynthesis.</text>
</comment>
<comment type="catalytic activity">
    <reaction evidence="2">
        <text>GTP + H2O = GDP + phosphate + H(+)</text>
        <dbReference type="Rhea" id="RHEA:19669"/>
        <dbReference type="ChEBI" id="CHEBI:15377"/>
        <dbReference type="ChEBI" id="CHEBI:15378"/>
        <dbReference type="ChEBI" id="CHEBI:37565"/>
        <dbReference type="ChEBI" id="CHEBI:43474"/>
        <dbReference type="ChEBI" id="CHEBI:58189"/>
        <dbReference type="EC" id="3.6.5.3"/>
    </reaction>
    <physiologicalReaction direction="left-to-right" evidence="2">
        <dbReference type="Rhea" id="RHEA:19670"/>
    </physiologicalReaction>
</comment>
<comment type="subunit">
    <text evidence="2">Monomer.</text>
</comment>
<comment type="subcellular location">
    <subcellularLocation>
        <location evidence="2">Cytoplasm</location>
    </subcellularLocation>
</comment>
<comment type="similarity">
    <text evidence="2">Belongs to the TRAFAC class translation factor GTPase superfamily. Classic translation factor GTPase family. EF-Tu/EF-1A subfamily.</text>
</comment>
<keyword id="KW-0963">Cytoplasm</keyword>
<keyword id="KW-0251">Elongation factor</keyword>
<keyword id="KW-0342">GTP-binding</keyword>
<keyword id="KW-0378">Hydrolase</keyword>
<keyword id="KW-0460">Magnesium</keyword>
<keyword id="KW-0479">Metal-binding</keyword>
<keyword id="KW-0547">Nucleotide-binding</keyword>
<keyword id="KW-0648">Protein biosynthesis</keyword>
<gene>
    <name evidence="2" type="primary">tuf</name>
    <name type="ordered locus">CYA_1302</name>
</gene>
<accession>Q2JUX4</accession>
<evidence type="ECO:0000250" key="1"/>
<evidence type="ECO:0000255" key="2">
    <source>
        <dbReference type="HAMAP-Rule" id="MF_00118"/>
    </source>
</evidence>
<protein>
    <recommendedName>
        <fullName evidence="2">Elongation factor Tu</fullName>
        <shortName evidence="2">EF-Tu</shortName>
        <ecNumber evidence="2">3.6.5.3</ecNumber>
    </recommendedName>
</protein>
<sequence length="409" mass="45171">MARAKFERTKPHVNVGTIGHVDHGKTTLTAAITMTLAALGQATAKRYDEIDAAPEERARGITINTAHVEYQTEKRHYAHVDCPGHADYVKNMITGAAQMDGAILVVSAADGPMPQTREHILLARQVGVPSLVVFLNKVDMVDDEELLELVELEIRELLSKYDFPGDEIPIIRGSALKALERMQANPKTQRGEDPWVDKIYELMDAVDSYIPTPERDVDKPFLMAVEDVFSITGRGTVATGRIERGRIKVGETVELVGLRETRSTTVTGLEMFQKTLDEGIAGDNVGVLLRGIQKNEVERGMVLAKPKTITPHTQFESEVYVLKKEEGGRHTPFFAGYRPQFYVRTTDVTGTITSFTADDGSKPEMVMPGDRVRMTVELIQPIAIEQGMRFAIREGGRTVGAGVVSKILK</sequence>
<dbReference type="EC" id="3.6.5.3" evidence="2"/>
<dbReference type="EMBL" id="CP000239">
    <property type="protein sequence ID" value="ABC99483.1"/>
    <property type="molecule type" value="Genomic_DNA"/>
</dbReference>
<dbReference type="RefSeq" id="WP_011430160.1">
    <property type="nucleotide sequence ID" value="NC_007775.1"/>
</dbReference>
<dbReference type="SMR" id="Q2JUX4"/>
<dbReference type="STRING" id="321327.CYA_1302"/>
<dbReference type="KEGG" id="cya:CYA_1302"/>
<dbReference type="eggNOG" id="COG0050">
    <property type="taxonomic scope" value="Bacteria"/>
</dbReference>
<dbReference type="HOGENOM" id="CLU_007265_0_1_3"/>
<dbReference type="OrthoDB" id="9804504at2"/>
<dbReference type="Proteomes" id="UP000008818">
    <property type="component" value="Chromosome"/>
</dbReference>
<dbReference type="GO" id="GO:0005829">
    <property type="term" value="C:cytosol"/>
    <property type="evidence" value="ECO:0007669"/>
    <property type="project" value="TreeGrafter"/>
</dbReference>
<dbReference type="GO" id="GO:0005525">
    <property type="term" value="F:GTP binding"/>
    <property type="evidence" value="ECO:0007669"/>
    <property type="project" value="UniProtKB-UniRule"/>
</dbReference>
<dbReference type="GO" id="GO:0003924">
    <property type="term" value="F:GTPase activity"/>
    <property type="evidence" value="ECO:0007669"/>
    <property type="project" value="InterPro"/>
</dbReference>
<dbReference type="GO" id="GO:0003746">
    <property type="term" value="F:translation elongation factor activity"/>
    <property type="evidence" value="ECO:0007669"/>
    <property type="project" value="UniProtKB-UniRule"/>
</dbReference>
<dbReference type="CDD" id="cd01884">
    <property type="entry name" value="EF_Tu"/>
    <property type="match status" value="1"/>
</dbReference>
<dbReference type="CDD" id="cd03697">
    <property type="entry name" value="EFTU_II"/>
    <property type="match status" value="1"/>
</dbReference>
<dbReference type="CDD" id="cd03707">
    <property type="entry name" value="EFTU_III"/>
    <property type="match status" value="1"/>
</dbReference>
<dbReference type="FunFam" id="2.40.30.10:FF:000001">
    <property type="entry name" value="Elongation factor Tu"/>
    <property type="match status" value="1"/>
</dbReference>
<dbReference type="FunFam" id="2.40.30.10:FF:000046">
    <property type="entry name" value="Elongation factor Tu"/>
    <property type="match status" value="1"/>
</dbReference>
<dbReference type="FunFam" id="3.40.50.300:FF:000003">
    <property type="entry name" value="Elongation factor Tu"/>
    <property type="match status" value="1"/>
</dbReference>
<dbReference type="Gene3D" id="3.40.50.300">
    <property type="entry name" value="P-loop containing nucleotide triphosphate hydrolases"/>
    <property type="match status" value="1"/>
</dbReference>
<dbReference type="Gene3D" id="2.40.30.10">
    <property type="entry name" value="Translation factors"/>
    <property type="match status" value="2"/>
</dbReference>
<dbReference type="HAMAP" id="MF_00118_B">
    <property type="entry name" value="EF_Tu_B"/>
    <property type="match status" value="1"/>
</dbReference>
<dbReference type="InterPro" id="IPR041709">
    <property type="entry name" value="EF-Tu_GTP-bd"/>
</dbReference>
<dbReference type="InterPro" id="IPR050055">
    <property type="entry name" value="EF-Tu_GTPase"/>
</dbReference>
<dbReference type="InterPro" id="IPR004161">
    <property type="entry name" value="EFTu-like_2"/>
</dbReference>
<dbReference type="InterPro" id="IPR033720">
    <property type="entry name" value="EFTU_2"/>
</dbReference>
<dbReference type="InterPro" id="IPR031157">
    <property type="entry name" value="G_TR_CS"/>
</dbReference>
<dbReference type="InterPro" id="IPR027417">
    <property type="entry name" value="P-loop_NTPase"/>
</dbReference>
<dbReference type="InterPro" id="IPR005225">
    <property type="entry name" value="Small_GTP-bd"/>
</dbReference>
<dbReference type="InterPro" id="IPR000795">
    <property type="entry name" value="T_Tr_GTP-bd_dom"/>
</dbReference>
<dbReference type="InterPro" id="IPR009000">
    <property type="entry name" value="Transl_B-barrel_sf"/>
</dbReference>
<dbReference type="InterPro" id="IPR009001">
    <property type="entry name" value="Transl_elong_EF1A/Init_IF2_C"/>
</dbReference>
<dbReference type="InterPro" id="IPR004541">
    <property type="entry name" value="Transl_elong_EFTu/EF1A_bac/org"/>
</dbReference>
<dbReference type="InterPro" id="IPR004160">
    <property type="entry name" value="Transl_elong_EFTu/EF1A_C"/>
</dbReference>
<dbReference type="NCBIfam" id="TIGR00485">
    <property type="entry name" value="EF-Tu"/>
    <property type="match status" value="1"/>
</dbReference>
<dbReference type="NCBIfam" id="NF000766">
    <property type="entry name" value="PRK00049.1"/>
    <property type="match status" value="1"/>
</dbReference>
<dbReference type="NCBIfam" id="NF009372">
    <property type="entry name" value="PRK12735.1"/>
    <property type="match status" value="1"/>
</dbReference>
<dbReference type="NCBIfam" id="NF009373">
    <property type="entry name" value="PRK12736.1"/>
    <property type="match status" value="1"/>
</dbReference>
<dbReference type="NCBIfam" id="TIGR00231">
    <property type="entry name" value="small_GTP"/>
    <property type="match status" value="1"/>
</dbReference>
<dbReference type="PANTHER" id="PTHR43721:SF22">
    <property type="entry name" value="ELONGATION FACTOR TU, MITOCHONDRIAL"/>
    <property type="match status" value="1"/>
</dbReference>
<dbReference type="PANTHER" id="PTHR43721">
    <property type="entry name" value="ELONGATION FACTOR TU-RELATED"/>
    <property type="match status" value="1"/>
</dbReference>
<dbReference type="Pfam" id="PF00009">
    <property type="entry name" value="GTP_EFTU"/>
    <property type="match status" value="1"/>
</dbReference>
<dbReference type="Pfam" id="PF03144">
    <property type="entry name" value="GTP_EFTU_D2"/>
    <property type="match status" value="1"/>
</dbReference>
<dbReference type="Pfam" id="PF03143">
    <property type="entry name" value="GTP_EFTU_D3"/>
    <property type="match status" value="1"/>
</dbReference>
<dbReference type="PRINTS" id="PR00315">
    <property type="entry name" value="ELONGATNFCT"/>
</dbReference>
<dbReference type="SUPFAM" id="SSF50465">
    <property type="entry name" value="EF-Tu/eEF-1alpha/eIF2-gamma C-terminal domain"/>
    <property type="match status" value="1"/>
</dbReference>
<dbReference type="SUPFAM" id="SSF52540">
    <property type="entry name" value="P-loop containing nucleoside triphosphate hydrolases"/>
    <property type="match status" value="1"/>
</dbReference>
<dbReference type="SUPFAM" id="SSF50447">
    <property type="entry name" value="Translation proteins"/>
    <property type="match status" value="1"/>
</dbReference>
<dbReference type="PROSITE" id="PS00301">
    <property type="entry name" value="G_TR_1"/>
    <property type="match status" value="1"/>
</dbReference>
<dbReference type="PROSITE" id="PS51722">
    <property type="entry name" value="G_TR_2"/>
    <property type="match status" value="1"/>
</dbReference>
<reference key="1">
    <citation type="journal article" date="2007" name="ISME J.">
        <title>Population level functional diversity in a microbial community revealed by comparative genomic and metagenomic analyses.</title>
        <authorList>
            <person name="Bhaya D."/>
            <person name="Grossman A.R."/>
            <person name="Steunou A.-S."/>
            <person name="Khuri N."/>
            <person name="Cohan F.M."/>
            <person name="Hamamura N."/>
            <person name="Melendrez M.C."/>
            <person name="Bateson M.M."/>
            <person name="Ward D.M."/>
            <person name="Heidelberg J.F."/>
        </authorList>
    </citation>
    <scope>NUCLEOTIDE SEQUENCE [LARGE SCALE GENOMIC DNA]</scope>
    <source>
        <strain>JA-3-3Ab</strain>
    </source>
</reference>
<name>EFTU_SYNJA</name>
<organism>
    <name type="scientific">Synechococcus sp. (strain JA-3-3Ab)</name>
    <name type="common">Cyanobacteria bacterium Yellowstone A-Prime</name>
    <dbReference type="NCBI Taxonomy" id="321327"/>
    <lineage>
        <taxon>Bacteria</taxon>
        <taxon>Bacillati</taxon>
        <taxon>Cyanobacteriota</taxon>
        <taxon>Cyanophyceae</taxon>
        <taxon>Synechococcales</taxon>
        <taxon>Synechococcaceae</taxon>
        <taxon>Synechococcus</taxon>
    </lineage>
</organism>